<feature type="chain" id="PRO_1000094830" description="S-adenosylmethionine:tRNA ribosyltransferase-isomerase">
    <location>
        <begin position="1"/>
        <end position="362"/>
    </location>
</feature>
<gene>
    <name evidence="1" type="primary">queA</name>
    <name type="ordered locus">Xaut_4270</name>
</gene>
<comment type="function">
    <text evidence="1">Transfers and isomerizes the ribose moiety from AdoMet to the 7-aminomethyl group of 7-deazaguanine (preQ1-tRNA) to give epoxyqueuosine (oQ-tRNA).</text>
</comment>
<comment type="catalytic activity">
    <reaction evidence="1">
        <text>7-aminomethyl-7-carbaguanosine(34) in tRNA + S-adenosyl-L-methionine = epoxyqueuosine(34) in tRNA + adenine + L-methionine + 2 H(+)</text>
        <dbReference type="Rhea" id="RHEA:32155"/>
        <dbReference type="Rhea" id="RHEA-COMP:10342"/>
        <dbReference type="Rhea" id="RHEA-COMP:18582"/>
        <dbReference type="ChEBI" id="CHEBI:15378"/>
        <dbReference type="ChEBI" id="CHEBI:16708"/>
        <dbReference type="ChEBI" id="CHEBI:57844"/>
        <dbReference type="ChEBI" id="CHEBI:59789"/>
        <dbReference type="ChEBI" id="CHEBI:82833"/>
        <dbReference type="ChEBI" id="CHEBI:194443"/>
        <dbReference type="EC" id="2.4.99.17"/>
    </reaction>
</comment>
<comment type="pathway">
    <text evidence="1">tRNA modification; tRNA-queuosine biosynthesis.</text>
</comment>
<comment type="subunit">
    <text evidence="1">Monomer.</text>
</comment>
<comment type="subcellular location">
    <subcellularLocation>
        <location evidence="1">Cytoplasm</location>
    </subcellularLocation>
</comment>
<comment type="similarity">
    <text evidence="1">Belongs to the QueA family.</text>
</comment>
<protein>
    <recommendedName>
        <fullName evidence="1">S-adenosylmethionine:tRNA ribosyltransferase-isomerase</fullName>
        <ecNumber evidence="1">2.4.99.17</ecNumber>
    </recommendedName>
    <alternativeName>
        <fullName evidence="1">Queuosine biosynthesis protein QueA</fullName>
    </alternativeName>
</protein>
<name>QUEA_XANP2</name>
<sequence>MRVDAFDFDLPEEHIALRPAEPRDAARMLVVRPGGAPELSDLKVRDLPDFITANDALVVNDTRVIPAALEGVRERDGGSAVRIEANLIKRLDASRWQAFAKPGKRLRVGDRVRFGGEGSACLLGALDAQIAAKEDDGSVILAFDLAGTALDEAVTAVGHMPIPPYIAARRAEDDRDRADYQTLFARVSGSVAAPTASLHFTPELMARIAATGASMHTVTLHVGAGTFLPVKAEDTTGHRMHAEWGEVSADTAAALNAVKAKGGRIFTVGSTSTRLIESATGEDGTIRPFVGETDIFITPGYRFRAVDGMLTNFHLPRSTLVMLVAAFVGHEAQKRAYAHAIAAGYRFYSYGDACLLLPEGGP</sequence>
<proteinExistence type="inferred from homology"/>
<organism>
    <name type="scientific">Xanthobacter autotrophicus (strain ATCC BAA-1158 / Py2)</name>
    <dbReference type="NCBI Taxonomy" id="78245"/>
    <lineage>
        <taxon>Bacteria</taxon>
        <taxon>Pseudomonadati</taxon>
        <taxon>Pseudomonadota</taxon>
        <taxon>Alphaproteobacteria</taxon>
        <taxon>Hyphomicrobiales</taxon>
        <taxon>Xanthobacteraceae</taxon>
        <taxon>Xanthobacter</taxon>
    </lineage>
</organism>
<evidence type="ECO:0000255" key="1">
    <source>
        <dbReference type="HAMAP-Rule" id="MF_00113"/>
    </source>
</evidence>
<dbReference type="EC" id="2.4.99.17" evidence="1"/>
<dbReference type="EMBL" id="CP000781">
    <property type="protein sequence ID" value="ABS69491.1"/>
    <property type="molecule type" value="Genomic_DNA"/>
</dbReference>
<dbReference type="SMR" id="A7IN97"/>
<dbReference type="STRING" id="78245.Xaut_4270"/>
<dbReference type="KEGG" id="xau:Xaut_4270"/>
<dbReference type="eggNOG" id="COG0809">
    <property type="taxonomic scope" value="Bacteria"/>
</dbReference>
<dbReference type="HOGENOM" id="CLU_039110_1_1_5"/>
<dbReference type="OrthoDB" id="9805933at2"/>
<dbReference type="PhylomeDB" id="A7IN97"/>
<dbReference type="UniPathway" id="UPA00392"/>
<dbReference type="Proteomes" id="UP000002417">
    <property type="component" value="Chromosome"/>
</dbReference>
<dbReference type="GO" id="GO:0005737">
    <property type="term" value="C:cytoplasm"/>
    <property type="evidence" value="ECO:0007669"/>
    <property type="project" value="UniProtKB-SubCell"/>
</dbReference>
<dbReference type="GO" id="GO:0051075">
    <property type="term" value="F:S-adenosylmethionine:tRNA ribosyltransferase-isomerase activity"/>
    <property type="evidence" value="ECO:0007669"/>
    <property type="project" value="UniProtKB-EC"/>
</dbReference>
<dbReference type="GO" id="GO:0008616">
    <property type="term" value="P:queuosine biosynthetic process"/>
    <property type="evidence" value="ECO:0007669"/>
    <property type="project" value="UniProtKB-UniRule"/>
</dbReference>
<dbReference type="GO" id="GO:0002099">
    <property type="term" value="P:tRNA wobble guanine modification"/>
    <property type="evidence" value="ECO:0007669"/>
    <property type="project" value="TreeGrafter"/>
</dbReference>
<dbReference type="Gene3D" id="2.40.10.240">
    <property type="entry name" value="QueA-like"/>
    <property type="match status" value="1"/>
</dbReference>
<dbReference type="Gene3D" id="3.40.1780.10">
    <property type="entry name" value="QueA-like"/>
    <property type="match status" value="2"/>
</dbReference>
<dbReference type="HAMAP" id="MF_00113">
    <property type="entry name" value="QueA"/>
    <property type="match status" value="1"/>
</dbReference>
<dbReference type="InterPro" id="IPR003699">
    <property type="entry name" value="QueA"/>
</dbReference>
<dbReference type="InterPro" id="IPR042118">
    <property type="entry name" value="QueA_dom1"/>
</dbReference>
<dbReference type="InterPro" id="IPR042119">
    <property type="entry name" value="QueA_dom2"/>
</dbReference>
<dbReference type="InterPro" id="IPR036100">
    <property type="entry name" value="QueA_sf"/>
</dbReference>
<dbReference type="NCBIfam" id="NF001140">
    <property type="entry name" value="PRK00147.1"/>
    <property type="match status" value="1"/>
</dbReference>
<dbReference type="NCBIfam" id="TIGR00113">
    <property type="entry name" value="queA"/>
    <property type="match status" value="1"/>
</dbReference>
<dbReference type="PANTHER" id="PTHR30307">
    <property type="entry name" value="S-ADENOSYLMETHIONINE:TRNA RIBOSYLTRANSFERASE-ISOMERASE"/>
    <property type="match status" value="1"/>
</dbReference>
<dbReference type="PANTHER" id="PTHR30307:SF0">
    <property type="entry name" value="S-ADENOSYLMETHIONINE:TRNA RIBOSYLTRANSFERASE-ISOMERASE"/>
    <property type="match status" value="1"/>
</dbReference>
<dbReference type="Pfam" id="PF02547">
    <property type="entry name" value="Queuosine_synth"/>
    <property type="match status" value="1"/>
</dbReference>
<dbReference type="SUPFAM" id="SSF111337">
    <property type="entry name" value="QueA-like"/>
    <property type="match status" value="1"/>
</dbReference>
<accession>A7IN97</accession>
<reference key="1">
    <citation type="submission" date="2007-07" db="EMBL/GenBank/DDBJ databases">
        <title>Complete sequence of chromosome of Xanthobacter autotrophicus Py2.</title>
        <authorList>
            <consortium name="US DOE Joint Genome Institute"/>
            <person name="Copeland A."/>
            <person name="Lucas S."/>
            <person name="Lapidus A."/>
            <person name="Barry K."/>
            <person name="Glavina del Rio T."/>
            <person name="Hammon N."/>
            <person name="Israni S."/>
            <person name="Dalin E."/>
            <person name="Tice H."/>
            <person name="Pitluck S."/>
            <person name="Sims D."/>
            <person name="Brettin T."/>
            <person name="Bruce D."/>
            <person name="Detter J.C."/>
            <person name="Han C."/>
            <person name="Tapia R."/>
            <person name="Brainard J."/>
            <person name="Schmutz J."/>
            <person name="Larimer F."/>
            <person name="Land M."/>
            <person name="Hauser L."/>
            <person name="Kyrpides N."/>
            <person name="Kim E."/>
            <person name="Ensigns S.A."/>
            <person name="Richardson P."/>
        </authorList>
    </citation>
    <scope>NUCLEOTIDE SEQUENCE [LARGE SCALE GENOMIC DNA]</scope>
    <source>
        <strain>ATCC BAA-1158 / Py2</strain>
    </source>
</reference>
<keyword id="KW-0963">Cytoplasm</keyword>
<keyword id="KW-0671">Queuosine biosynthesis</keyword>
<keyword id="KW-1185">Reference proteome</keyword>
<keyword id="KW-0949">S-adenosyl-L-methionine</keyword>
<keyword id="KW-0808">Transferase</keyword>